<gene>
    <name evidence="1" type="primary">fluC1</name>
    <name evidence="1" type="synonym">crcB1</name>
    <name type="ordered locus">MW1723</name>
</gene>
<accession>Q8NW04</accession>
<evidence type="ECO:0000255" key="1">
    <source>
        <dbReference type="HAMAP-Rule" id="MF_00454"/>
    </source>
</evidence>
<comment type="function">
    <text evidence="1">Fluoride-specific ion channel. Important for reducing fluoride concentration in the cell, thus reducing its toxicity.</text>
</comment>
<comment type="catalytic activity">
    <reaction evidence="1">
        <text>fluoride(in) = fluoride(out)</text>
        <dbReference type="Rhea" id="RHEA:76159"/>
        <dbReference type="ChEBI" id="CHEBI:17051"/>
    </reaction>
    <physiologicalReaction direction="left-to-right" evidence="1">
        <dbReference type="Rhea" id="RHEA:76160"/>
    </physiologicalReaction>
</comment>
<comment type="activity regulation">
    <text evidence="1">Na(+) is not transported, but it plays an essential structural role and its presence is essential for fluoride channel function.</text>
</comment>
<comment type="subcellular location">
    <subcellularLocation>
        <location evidence="1">Cell membrane</location>
        <topology evidence="1">Multi-pass membrane protein</topology>
    </subcellularLocation>
</comment>
<comment type="similarity">
    <text evidence="1">Belongs to the fluoride channel Fluc/FEX (TC 1.A.43) family.</text>
</comment>
<proteinExistence type="inferred from homology"/>
<sequence length="147" mass="16352">MHRQFLSSRCQNLFFKFKLLLFEVNQMQYVYIFIGGALGALLRYLISFLNTDGGFPIGTLIANLTGAFVMGLLTALTIAFFSNHPTLKKAITTGFLGALTTFSTFQLELIHMFDHQQFITLLLYAVTSYVFGILLCYVGIKLGGGLS</sequence>
<dbReference type="EMBL" id="BA000033">
    <property type="protein sequence ID" value="BAB95588.1"/>
    <property type="molecule type" value="Genomic_DNA"/>
</dbReference>
<dbReference type="SMR" id="Q8NW04"/>
<dbReference type="KEGG" id="sam:MW1723"/>
<dbReference type="HOGENOM" id="CLU_114342_3_2_9"/>
<dbReference type="GO" id="GO:0005886">
    <property type="term" value="C:plasma membrane"/>
    <property type="evidence" value="ECO:0007669"/>
    <property type="project" value="UniProtKB-SubCell"/>
</dbReference>
<dbReference type="GO" id="GO:0062054">
    <property type="term" value="F:fluoride channel activity"/>
    <property type="evidence" value="ECO:0007669"/>
    <property type="project" value="UniProtKB-UniRule"/>
</dbReference>
<dbReference type="GO" id="GO:0046872">
    <property type="term" value="F:metal ion binding"/>
    <property type="evidence" value="ECO:0007669"/>
    <property type="project" value="UniProtKB-KW"/>
</dbReference>
<dbReference type="GO" id="GO:0140114">
    <property type="term" value="P:cellular detoxification of fluoride"/>
    <property type="evidence" value="ECO:0007669"/>
    <property type="project" value="UniProtKB-UniRule"/>
</dbReference>
<dbReference type="HAMAP" id="MF_00454">
    <property type="entry name" value="FluC"/>
    <property type="match status" value="1"/>
</dbReference>
<dbReference type="InterPro" id="IPR003691">
    <property type="entry name" value="FluC"/>
</dbReference>
<dbReference type="NCBIfam" id="TIGR00494">
    <property type="entry name" value="crcB"/>
    <property type="match status" value="1"/>
</dbReference>
<dbReference type="NCBIfam" id="NF010797">
    <property type="entry name" value="PRK14201.1"/>
    <property type="match status" value="1"/>
</dbReference>
<dbReference type="PANTHER" id="PTHR28259">
    <property type="entry name" value="FLUORIDE EXPORT PROTEIN 1-RELATED"/>
    <property type="match status" value="1"/>
</dbReference>
<dbReference type="PANTHER" id="PTHR28259:SF16">
    <property type="entry name" value="FLUORIDE-SPECIFIC ION CHANNEL FLUC 2"/>
    <property type="match status" value="1"/>
</dbReference>
<dbReference type="Pfam" id="PF02537">
    <property type="entry name" value="CRCB"/>
    <property type="match status" value="1"/>
</dbReference>
<feature type="chain" id="PRO_0000110183" description="Fluoride-specific ion channel FluC 1">
    <location>
        <begin position="1"/>
        <end position="147"/>
    </location>
</feature>
<feature type="transmembrane region" description="Helical" evidence="1">
    <location>
        <begin position="29"/>
        <end position="49"/>
    </location>
</feature>
<feature type="transmembrane region" description="Helical" evidence="1">
    <location>
        <begin position="61"/>
        <end position="81"/>
    </location>
</feature>
<feature type="transmembrane region" description="Helical" evidence="1">
    <location>
        <begin position="90"/>
        <end position="110"/>
    </location>
</feature>
<feature type="transmembrane region" description="Helical" evidence="1">
    <location>
        <begin position="118"/>
        <end position="138"/>
    </location>
</feature>
<feature type="binding site" evidence="1">
    <location>
        <position position="97"/>
    </location>
    <ligand>
        <name>Na(+)</name>
        <dbReference type="ChEBI" id="CHEBI:29101"/>
        <note>structural</note>
    </ligand>
</feature>
<feature type="binding site" evidence="1">
    <location>
        <position position="100"/>
    </location>
    <ligand>
        <name>Na(+)</name>
        <dbReference type="ChEBI" id="CHEBI:29101"/>
        <note>structural</note>
    </ligand>
</feature>
<protein>
    <recommendedName>
        <fullName evidence="1">Fluoride-specific ion channel FluC 1</fullName>
    </recommendedName>
</protein>
<organism>
    <name type="scientific">Staphylococcus aureus (strain MW2)</name>
    <dbReference type="NCBI Taxonomy" id="196620"/>
    <lineage>
        <taxon>Bacteria</taxon>
        <taxon>Bacillati</taxon>
        <taxon>Bacillota</taxon>
        <taxon>Bacilli</taxon>
        <taxon>Bacillales</taxon>
        <taxon>Staphylococcaceae</taxon>
        <taxon>Staphylococcus</taxon>
    </lineage>
</organism>
<reference key="1">
    <citation type="journal article" date="2002" name="Lancet">
        <title>Genome and virulence determinants of high virulence community-acquired MRSA.</title>
        <authorList>
            <person name="Baba T."/>
            <person name="Takeuchi F."/>
            <person name="Kuroda M."/>
            <person name="Yuzawa H."/>
            <person name="Aoki K."/>
            <person name="Oguchi A."/>
            <person name="Nagai Y."/>
            <person name="Iwama N."/>
            <person name="Asano K."/>
            <person name="Naimi T."/>
            <person name="Kuroda H."/>
            <person name="Cui L."/>
            <person name="Yamamoto K."/>
            <person name="Hiramatsu K."/>
        </authorList>
    </citation>
    <scope>NUCLEOTIDE SEQUENCE [LARGE SCALE GENOMIC DNA]</scope>
    <source>
        <strain>MW2</strain>
    </source>
</reference>
<keyword id="KW-1003">Cell membrane</keyword>
<keyword id="KW-0407">Ion channel</keyword>
<keyword id="KW-0406">Ion transport</keyword>
<keyword id="KW-0472">Membrane</keyword>
<keyword id="KW-0479">Metal-binding</keyword>
<keyword id="KW-0915">Sodium</keyword>
<keyword id="KW-0812">Transmembrane</keyword>
<keyword id="KW-1133">Transmembrane helix</keyword>
<keyword id="KW-0813">Transport</keyword>
<name>FLUC1_STAAW</name>